<reference key="1">
    <citation type="journal article" date="2007" name="J. Bacteriol.">
        <title>Genome of the opportunistic pathogen Streptococcus sanguinis.</title>
        <authorList>
            <person name="Xu P."/>
            <person name="Alves J.M."/>
            <person name="Kitten T."/>
            <person name="Brown A."/>
            <person name="Chen Z."/>
            <person name="Ozaki L.S."/>
            <person name="Manque P."/>
            <person name="Ge X."/>
            <person name="Serrano M.G."/>
            <person name="Puiu D."/>
            <person name="Hendricks S."/>
            <person name="Wang Y."/>
            <person name="Chaplin M.D."/>
            <person name="Akan D."/>
            <person name="Paik S."/>
            <person name="Peterson D.L."/>
            <person name="Macrina F.L."/>
            <person name="Buck G.A."/>
        </authorList>
    </citation>
    <scope>NUCLEOTIDE SEQUENCE [LARGE SCALE GENOMIC DNA]</scope>
    <source>
        <strain>SK36</strain>
    </source>
</reference>
<name>ACCA_STRSV</name>
<evidence type="ECO:0000255" key="1">
    <source>
        <dbReference type="HAMAP-Rule" id="MF_00823"/>
    </source>
</evidence>
<evidence type="ECO:0000255" key="2">
    <source>
        <dbReference type="PROSITE-ProRule" id="PRU01137"/>
    </source>
</evidence>
<accession>A3CQ50</accession>
<gene>
    <name evidence="1" type="primary">accA</name>
    <name type="ordered locus">SSA_1930</name>
</gene>
<proteinExistence type="inferred from homology"/>
<sequence length="256" mass="28336">MTKITRIIKEARDQARLTALDFAQGIFENFVELHGDRSFRDDGAVIGGIGTLNGQPVTVVGIQKGRNLQDNLRRNFGQPHPEGYRKTLRLMKQAEKFGRPVVTFINTAGAYPGVGAEERGQGEAIARNLMEMSNLKVPIIAIIIGEGGSGGALALAVADKVWMLENSMYAVLSPEGFASILWKDGSRAMEAAELMKITSHELLQMEVVDKVIPERGFNNHELLAAVKEEIAAELDSLSQLPLEQLLENRYQRFRKY</sequence>
<dbReference type="EC" id="2.1.3.15" evidence="1"/>
<dbReference type="EMBL" id="CP000387">
    <property type="protein sequence ID" value="ABN45305.1"/>
    <property type="molecule type" value="Genomic_DNA"/>
</dbReference>
<dbReference type="RefSeq" id="WP_011837453.1">
    <property type="nucleotide sequence ID" value="NC_009009.1"/>
</dbReference>
<dbReference type="RefSeq" id="YP_001035855.1">
    <property type="nucleotide sequence ID" value="NC_009009.1"/>
</dbReference>
<dbReference type="SMR" id="A3CQ50"/>
<dbReference type="STRING" id="388919.SSA_1930"/>
<dbReference type="KEGG" id="ssa:SSA_1930"/>
<dbReference type="PATRIC" id="fig|388919.9.peg.1829"/>
<dbReference type="eggNOG" id="COG0825">
    <property type="taxonomic scope" value="Bacteria"/>
</dbReference>
<dbReference type="HOGENOM" id="CLU_015486_0_2_9"/>
<dbReference type="OrthoDB" id="9808023at2"/>
<dbReference type="UniPathway" id="UPA00655">
    <property type="reaction ID" value="UER00711"/>
</dbReference>
<dbReference type="Proteomes" id="UP000002148">
    <property type="component" value="Chromosome"/>
</dbReference>
<dbReference type="GO" id="GO:0009317">
    <property type="term" value="C:acetyl-CoA carboxylase complex"/>
    <property type="evidence" value="ECO:0007669"/>
    <property type="project" value="InterPro"/>
</dbReference>
<dbReference type="GO" id="GO:0003989">
    <property type="term" value="F:acetyl-CoA carboxylase activity"/>
    <property type="evidence" value="ECO:0007669"/>
    <property type="project" value="InterPro"/>
</dbReference>
<dbReference type="GO" id="GO:0005524">
    <property type="term" value="F:ATP binding"/>
    <property type="evidence" value="ECO:0007669"/>
    <property type="project" value="UniProtKB-KW"/>
</dbReference>
<dbReference type="GO" id="GO:0016743">
    <property type="term" value="F:carboxyl- or carbamoyltransferase activity"/>
    <property type="evidence" value="ECO:0007669"/>
    <property type="project" value="UniProtKB-UniRule"/>
</dbReference>
<dbReference type="GO" id="GO:0006633">
    <property type="term" value="P:fatty acid biosynthetic process"/>
    <property type="evidence" value="ECO:0007669"/>
    <property type="project" value="UniProtKB-KW"/>
</dbReference>
<dbReference type="GO" id="GO:2001295">
    <property type="term" value="P:malonyl-CoA biosynthetic process"/>
    <property type="evidence" value="ECO:0007669"/>
    <property type="project" value="UniProtKB-UniRule"/>
</dbReference>
<dbReference type="Gene3D" id="3.90.226.10">
    <property type="entry name" value="2-enoyl-CoA Hydratase, Chain A, domain 1"/>
    <property type="match status" value="1"/>
</dbReference>
<dbReference type="HAMAP" id="MF_00823">
    <property type="entry name" value="AcetylCoA_CT_alpha"/>
    <property type="match status" value="1"/>
</dbReference>
<dbReference type="InterPro" id="IPR001095">
    <property type="entry name" value="Acetyl_CoA_COase_a_su"/>
</dbReference>
<dbReference type="InterPro" id="IPR029045">
    <property type="entry name" value="ClpP/crotonase-like_dom_sf"/>
</dbReference>
<dbReference type="InterPro" id="IPR011763">
    <property type="entry name" value="COA_CT_C"/>
</dbReference>
<dbReference type="NCBIfam" id="TIGR00513">
    <property type="entry name" value="accA"/>
    <property type="match status" value="1"/>
</dbReference>
<dbReference type="NCBIfam" id="NF041504">
    <property type="entry name" value="AccA_sub"/>
    <property type="match status" value="1"/>
</dbReference>
<dbReference type="NCBIfam" id="NF004344">
    <property type="entry name" value="PRK05724.1"/>
    <property type="match status" value="1"/>
</dbReference>
<dbReference type="NCBIfam" id="NF008971">
    <property type="entry name" value="PRK12319.1"/>
    <property type="match status" value="1"/>
</dbReference>
<dbReference type="PANTHER" id="PTHR42853">
    <property type="entry name" value="ACETYL-COENZYME A CARBOXYLASE CARBOXYL TRANSFERASE SUBUNIT ALPHA"/>
    <property type="match status" value="1"/>
</dbReference>
<dbReference type="PANTHER" id="PTHR42853:SF3">
    <property type="entry name" value="ACETYL-COENZYME A CARBOXYLASE CARBOXYL TRANSFERASE SUBUNIT ALPHA, CHLOROPLASTIC"/>
    <property type="match status" value="1"/>
</dbReference>
<dbReference type="Pfam" id="PF03255">
    <property type="entry name" value="ACCA"/>
    <property type="match status" value="1"/>
</dbReference>
<dbReference type="PRINTS" id="PR01069">
    <property type="entry name" value="ACCCTRFRASEA"/>
</dbReference>
<dbReference type="SUPFAM" id="SSF52096">
    <property type="entry name" value="ClpP/crotonase"/>
    <property type="match status" value="1"/>
</dbReference>
<dbReference type="PROSITE" id="PS50989">
    <property type="entry name" value="COA_CT_CTER"/>
    <property type="match status" value="1"/>
</dbReference>
<keyword id="KW-0067">ATP-binding</keyword>
<keyword id="KW-0963">Cytoplasm</keyword>
<keyword id="KW-0275">Fatty acid biosynthesis</keyword>
<keyword id="KW-0276">Fatty acid metabolism</keyword>
<keyword id="KW-0444">Lipid biosynthesis</keyword>
<keyword id="KW-0443">Lipid metabolism</keyword>
<keyword id="KW-0547">Nucleotide-binding</keyword>
<keyword id="KW-1185">Reference proteome</keyword>
<keyword id="KW-0808">Transferase</keyword>
<organism>
    <name type="scientific">Streptococcus sanguinis (strain SK36)</name>
    <dbReference type="NCBI Taxonomy" id="388919"/>
    <lineage>
        <taxon>Bacteria</taxon>
        <taxon>Bacillati</taxon>
        <taxon>Bacillota</taxon>
        <taxon>Bacilli</taxon>
        <taxon>Lactobacillales</taxon>
        <taxon>Streptococcaceae</taxon>
        <taxon>Streptococcus</taxon>
    </lineage>
</organism>
<protein>
    <recommendedName>
        <fullName evidence="1">Acetyl-coenzyme A carboxylase carboxyl transferase subunit alpha</fullName>
        <shortName evidence="1">ACCase subunit alpha</shortName>
        <shortName evidence="1">Acetyl-CoA carboxylase carboxyltransferase subunit alpha</shortName>
        <ecNumber evidence="1">2.1.3.15</ecNumber>
    </recommendedName>
</protein>
<feature type="chain" id="PRO_1000062687" description="Acetyl-coenzyme A carboxylase carboxyl transferase subunit alpha">
    <location>
        <begin position="1"/>
        <end position="256"/>
    </location>
</feature>
<feature type="domain" description="CoA carboxyltransferase C-terminal" evidence="2">
    <location>
        <begin position="1"/>
        <end position="236"/>
    </location>
</feature>
<comment type="function">
    <text evidence="1">Component of the acetyl coenzyme A carboxylase (ACC) complex. First, biotin carboxylase catalyzes the carboxylation of biotin on its carrier protein (BCCP) and then the CO(2) group is transferred by the carboxyltransferase to acetyl-CoA to form malonyl-CoA.</text>
</comment>
<comment type="catalytic activity">
    <reaction evidence="1">
        <text>N(6)-carboxybiotinyl-L-lysyl-[protein] + acetyl-CoA = N(6)-biotinyl-L-lysyl-[protein] + malonyl-CoA</text>
        <dbReference type="Rhea" id="RHEA:54728"/>
        <dbReference type="Rhea" id="RHEA-COMP:10505"/>
        <dbReference type="Rhea" id="RHEA-COMP:10506"/>
        <dbReference type="ChEBI" id="CHEBI:57288"/>
        <dbReference type="ChEBI" id="CHEBI:57384"/>
        <dbReference type="ChEBI" id="CHEBI:83144"/>
        <dbReference type="ChEBI" id="CHEBI:83145"/>
        <dbReference type="EC" id="2.1.3.15"/>
    </reaction>
</comment>
<comment type="pathway">
    <text evidence="1">Lipid metabolism; malonyl-CoA biosynthesis; malonyl-CoA from acetyl-CoA: step 1/1.</text>
</comment>
<comment type="subunit">
    <text evidence="1">Acetyl-CoA carboxylase is a heterohexamer composed of biotin carboxyl carrier protein (AccB), biotin carboxylase (AccC) and two subunits each of ACCase subunit alpha (AccA) and ACCase subunit beta (AccD).</text>
</comment>
<comment type="subcellular location">
    <subcellularLocation>
        <location evidence="1">Cytoplasm</location>
    </subcellularLocation>
</comment>
<comment type="similarity">
    <text evidence="1">Belongs to the AccA family.</text>
</comment>